<accession>Q09209</accession>
<sequence>MSAPNCARKYDIARLSSLNFQISQYVYLSLISLTFIFSYFAVKIVHQKSIFQLSTKILLFHNLVSANLHQLLYLFSALRRLNLAYFYIDEPCVPLISEADCLPYLKVLVTGISGMIYGQTGLLLERGCATFIKDYDKKTSMFVGIAISIAILFLSLITGKIIIWDDPLQGYLLSCVSYPSQSVERSRLFASIYTFISSFNLVFSVLLRRYNKKLEYSTPFVVGPRFRKREVIDSTSTICFLTFVQFIFMFIYSFGIFTLKTIRSMLTYRQYYFIVVWFYTIPFIAALFPILLVYRIRSSHVSRVTIIKTFTKTKQTQEEHIKQLKNVWN</sequence>
<comment type="subcellular location">
    <subcellularLocation>
        <location evidence="2">Membrane</location>
        <topology evidence="2">Multi-pass membrane protein</topology>
    </subcellularLocation>
</comment>
<comment type="similarity">
    <text evidence="2">Belongs to the nematode receptor-like protein sra family.</text>
</comment>
<protein>
    <recommendedName>
        <fullName>Serpentine receptor class alpha-7</fullName>
        <shortName>Protein sra-7</shortName>
    </recommendedName>
</protein>
<reference key="1">
    <citation type="journal article" date="1998" name="Science">
        <title>Genome sequence of the nematode C. elegans: a platform for investigating biology.</title>
        <authorList>
            <consortium name="The C. elegans sequencing consortium"/>
        </authorList>
    </citation>
    <scope>NUCLEOTIDE SEQUENCE [LARGE SCALE GENOMIC DNA]</scope>
    <source>
        <strain>Bristol N2</strain>
    </source>
</reference>
<name>SRA7_CAEEL</name>
<evidence type="ECO:0000255" key="1"/>
<evidence type="ECO:0000305" key="2"/>
<dbReference type="EMBL" id="Z48009">
    <property type="protein sequence ID" value="CAA88081.1"/>
    <property type="molecule type" value="Genomic_DNA"/>
</dbReference>
<dbReference type="PIR" id="T18617">
    <property type="entry name" value="T18617"/>
</dbReference>
<dbReference type="RefSeq" id="NP_496050.1">
    <property type="nucleotide sequence ID" value="NM_063649.2"/>
</dbReference>
<dbReference type="SMR" id="Q09209"/>
<dbReference type="FunCoup" id="Q09209">
    <property type="interactions" value="9"/>
</dbReference>
<dbReference type="STRING" id="6239.AH6.11.1"/>
<dbReference type="PaxDb" id="6239-AH6.11"/>
<dbReference type="EnsemblMetazoa" id="AH6.11.1">
    <property type="protein sequence ID" value="AH6.11.1"/>
    <property type="gene ID" value="WBGene00005033"/>
</dbReference>
<dbReference type="GeneID" id="191778"/>
<dbReference type="KEGG" id="cel:CELE_AH6.11"/>
<dbReference type="UCSC" id="AH6.11">
    <property type="organism name" value="c. elegans"/>
</dbReference>
<dbReference type="AGR" id="WB:WBGene00005033"/>
<dbReference type="CTD" id="191778"/>
<dbReference type="WormBase" id="AH6.11">
    <property type="protein sequence ID" value="CE01452"/>
    <property type="gene ID" value="WBGene00005033"/>
    <property type="gene designation" value="sra-7"/>
</dbReference>
<dbReference type="eggNOG" id="ENOG502TJHT">
    <property type="taxonomic scope" value="Eukaryota"/>
</dbReference>
<dbReference type="GeneTree" id="ENSGT00970000195848"/>
<dbReference type="HOGENOM" id="CLU_048025_0_1_1"/>
<dbReference type="InParanoid" id="Q09209"/>
<dbReference type="OMA" id="SAPNCAR"/>
<dbReference type="OrthoDB" id="5840330at2759"/>
<dbReference type="PhylomeDB" id="Q09209"/>
<dbReference type="PRO" id="PR:Q09209"/>
<dbReference type="Proteomes" id="UP000001940">
    <property type="component" value="Chromosome II"/>
</dbReference>
<dbReference type="GO" id="GO:0016020">
    <property type="term" value="C:membrane"/>
    <property type="evidence" value="ECO:0007669"/>
    <property type="project" value="UniProtKB-SubCell"/>
</dbReference>
<dbReference type="GO" id="GO:0004930">
    <property type="term" value="F:G protein-coupled receptor activity"/>
    <property type="evidence" value="ECO:0007669"/>
    <property type="project" value="InterPro"/>
</dbReference>
<dbReference type="GO" id="GO:0004984">
    <property type="term" value="F:olfactory receptor activity"/>
    <property type="evidence" value="ECO:0000318"/>
    <property type="project" value="GO_Central"/>
</dbReference>
<dbReference type="GO" id="GO:0050907">
    <property type="term" value="P:detection of chemical stimulus involved in sensory perception"/>
    <property type="evidence" value="ECO:0000318"/>
    <property type="project" value="GO_Central"/>
</dbReference>
<dbReference type="InterPro" id="IPR000344">
    <property type="entry name" value="7TM_GPCR_serpentine_rcpt_Sra"/>
</dbReference>
<dbReference type="InterPro" id="IPR051080">
    <property type="entry name" value="Nematode_rcpt-like_serp_alpha"/>
</dbReference>
<dbReference type="PANTHER" id="PTHR31357:SF5">
    <property type="entry name" value="SERPENTINE RECEPTOR CLASS ALPHA-1-RELATED"/>
    <property type="match status" value="1"/>
</dbReference>
<dbReference type="PANTHER" id="PTHR31357">
    <property type="entry name" value="SERPENTINE RECEPTOR CLASS ALPHA-10"/>
    <property type="match status" value="1"/>
</dbReference>
<dbReference type="Pfam" id="PF02117">
    <property type="entry name" value="7TM_GPCR_Sra"/>
    <property type="match status" value="1"/>
</dbReference>
<dbReference type="PRINTS" id="PR00697">
    <property type="entry name" value="TMPROTEINSRA"/>
</dbReference>
<keyword id="KW-0472">Membrane</keyword>
<keyword id="KW-1185">Reference proteome</keyword>
<keyword id="KW-0812">Transmembrane</keyword>
<keyword id="KW-1133">Transmembrane helix</keyword>
<proteinExistence type="inferred from homology"/>
<gene>
    <name type="primary">sra-7</name>
    <name type="ORF">AH6.11</name>
</gene>
<feature type="chain" id="PRO_0000104473" description="Serpentine receptor class alpha-7">
    <location>
        <begin position="1"/>
        <end position="329"/>
    </location>
</feature>
<feature type="transmembrane region" description="Helical" evidence="1">
    <location>
        <begin position="25"/>
        <end position="45"/>
    </location>
</feature>
<feature type="transmembrane region" description="Helical" evidence="1">
    <location>
        <begin position="57"/>
        <end position="77"/>
    </location>
</feature>
<feature type="transmembrane region" description="Helical" evidence="1">
    <location>
        <begin position="104"/>
        <end position="124"/>
    </location>
</feature>
<feature type="transmembrane region" description="Helical" evidence="1">
    <location>
        <begin position="143"/>
        <end position="163"/>
    </location>
</feature>
<feature type="transmembrane region" description="Helical" evidence="1">
    <location>
        <begin position="187"/>
        <end position="207"/>
    </location>
</feature>
<feature type="transmembrane region" description="Helical" evidence="1">
    <location>
        <begin position="237"/>
        <end position="257"/>
    </location>
</feature>
<feature type="transmembrane region" description="Helical" evidence="1">
    <location>
        <begin position="273"/>
        <end position="293"/>
    </location>
</feature>
<organism>
    <name type="scientific">Caenorhabditis elegans</name>
    <dbReference type="NCBI Taxonomy" id="6239"/>
    <lineage>
        <taxon>Eukaryota</taxon>
        <taxon>Metazoa</taxon>
        <taxon>Ecdysozoa</taxon>
        <taxon>Nematoda</taxon>
        <taxon>Chromadorea</taxon>
        <taxon>Rhabditida</taxon>
        <taxon>Rhabditina</taxon>
        <taxon>Rhabditomorpha</taxon>
        <taxon>Rhabditoidea</taxon>
        <taxon>Rhabditidae</taxon>
        <taxon>Peloderinae</taxon>
        <taxon>Caenorhabditis</taxon>
    </lineage>
</organism>